<organism>
    <name type="scientific">Oryza sativa subsp. indica</name>
    <name type="common">Rice</name>
    <dbReference type="NCBI Taxonomy" id="39946"/>
    <lineage>
        <taxon>Eukaryota</taxon>
        <taxon>Viridiplantae</taxon>
        <taxon>Streptophyta</taxon>
        <taxon>Embryophyta</taxon>
        <taxon>Tracheophyta</taxon>
        <taxon>Spermatophyta</taxon>
        <taxon>Magnoliopsida</taxon>
        <taxon>Liliopsida</taxon>
        <taxon>Poales</taxon>
        <taxon>Poaceae</taxon>
        <taxon>BOP clade</taxon>
        <taxon>Oryzoideae</taxon>
        <taxon>Oryzeae</taxon>
        <taxon>Oryzinae</taxon>
        <taxon>Oryza</taxon>
        <taxon>Oryza sativa</taxon>
    </lineage>
</organism>
<dbReference type="EMBL" id="CM000126">
    <property type="protein sequence ID" value="EEC71797.1"/>
    <property type="molecule type" value="Genomic_DNA"/>
</dbReference>
<dbReference type="EMBL" id="CF955800">
    <property type="status" value="NOT_ANNOTATED_CDS"/>
    <property type="molecule type" value="mRNA"/>
</dbReference>
<dbReference type="STRING" id="39946.B8AC36"/>
<dbReference type="EnsemblPlants" id="BGIOSGA000495-TA">
    <property type="protein sequence ID" value="BGIOSGA000495-PA"/>
    <property type="gene ID" value="BGIOSGA000495"/>
</dbReference>
<dbReference type="EnsemblPlants" id="OsGoSa_01g0039400.01">
    <property type="protein sequence ID" value="OsGoSa_01g0039400.01"/>
    <property type="gene ID" value="OsGoSa_01g0039400"/>
</dbReference>
<dbReference type="EnsemblPlants" id="OsIR64_01g0038870.01">
    <property type="protein sequence ID" value="OsIR64_01g0038870.01"/>
    <property type="gene ID" value="OsIR64_01g0038870"/>
</dbReference>
<dbReference type="EnsemblPlants" id="OsKYG_01g0039160.01">
    <property type="protein sequence ID" value="OsKYG_01g0039160.01"/>
    <property type="gene ID" value="OsKYG_01g0039160"/>
</dbReference>
<dbReference type="EnsemblPlants" id="OsLaMu_01g0039250.01">
    <property type="protein sequence ID" value="OsLaMu_01g0039250.01"/>
    <property type="gene ID" value="OsLaMu_01g0039250"/>
</dbReference>
<dbReference type="EnsemblPlants" id="OsLima_01g0039220.01">
    <property type="protein sequence ID" value="OsLima_01g0039220.01"/>
    <property type="gene ID" value="OsLima_01g0039220"/>
</dbReference>
<dbReference type="EnsemblPlants" id="OsLiXu_01g0039390.01">
    <property type="protein sequence ID" value="OsLiXu_01g0039390.01"/>
    <property type="gene ID" value="OsLiXu_01g0039390"/>
</dbReference>
<dbReference type="EnsemblPlants" id="OsMH63_01G040020_01">
    <property type="protein sequence ID" value="OsMH63_01G040020_01"/>
    <property type="gene ID" value="OsMH63_01G040020"/>
</dbReference>
<dbReference type="EnsemblPlants" id="OsPr106_01g0039170.01">
    <property type="protein sequence ID" value="OsPr106_01g0039170.01"/>
    <property type="gene ID" value="OsPr106_01g0039170"/>
</dbReference>
<dbReference type="EnsemblPlants" id="OsZS97_01G039380_01">
    <property type="protein sequence ID" value="OsZS97_01G039380_01"/>
    <property type="gene ID" value="OsZS97_01G039380"/>
</dbReference>
<dbReference type="Gramene" id="BGIOSGA000495-TA">
    <property type="protein sequence ID" value="BGIOSGA000495-PA"/>
    <property type="gene ID" value="BGIOSGA000495"/>
</dbReference>
<dbReference type="Gramene" id="OsGoSa_01g0039400.01">
    <property type="protein sequence ID" value="OsGoSa_01g0039400.01"/>
    <property type="gene ID" value="OsGoSa_01g0039400"/>
</dbReference>
<dbReference type="Gramene" id="OsIR64_01g0038870.01">
    <property type="protein sequence ID" value="OsIR64_01g0038870.01"/>
    <property type="gene ID" value="OsIR64_01g0038870"/>
</dbReference>
<dbReference type="Gramene" id="OsKYG_01g0039160.01">
    <property type="protein sequence ID" value="OsKYG_01g0039160.01"/>
    <property type="gene ID" value="OsKYG_01g0039160"/>
</dbReference>
<dbReference type="Gramene" id="OsLaMu_01g0039250.01">
    <property type="protein sequence ID" value="OsLaMu_01g0039250.01"/>
    <property type="gene ID" value="OsLaMu_01g0039250"/>
</dbReference>
<dbReference type="Gramene" id="OsLima_01g0039220.01">
    <property type="protein sequence ID" value="OsLima_01g0039220.01"/>
    <property type="gene ID" value="OsLima_01g0039220"/>
</dbReference>
<dbReference type="Gramene" id="OsLiXu_01g0039390.01">
    <property type="protein sequence ID" value="OsLiXu_01g0039390.01"/>
    <property type="gene ID" value="OsLiXu_01g0039390"/>
</dbReference>
<dbReference type="Gramene" id="OsMH63_01G040020_01">
    <property type="protein sequence ID" value="OsMH63_01G040020_01"/>
    <property type="gene ID" value="OsMH63_01G040020"/>
</dbReference>
<dbReference type="Gramene" id="OsPr106_01g0039170.01">
    <property type="protein sequence ID" value="OsPr106_01g0039170.01"/>
    <property type="gene ID" value="OsPr106_01g0039170"/>
</dbReference>
<dbReference type="Gramene" id="OsZS97_01G039380_01">
    <property type="protein sequence ID" value="OsZS97_01G039380_01"/>
    <property type="gene ID" value="OsZS97_01G039380"/>
</dbReference>
<dbReference type="HOGENOM" id="CLU_103961_1_0_1"/>
<dbReference type="OMA" id="IYACRRD"/>
<dbReference type="OrthoDB" id="754299at2759"/>
<dbReference type="Proteomes" id="UP000007015">
    <property type="component" value="Chromosome 1"/>
</dbReference>
<dbReference type="GO" id="GO:0005886">
    <property type="term" value="C:plasma membrane"/>
    <property type="evidence" value="ECO:0007669"/>
    <property type="project" value="UniProtKB-SubCell"/>
</dbReference>
<dbReference type="InterPro" id="IPR006702">
    <property type="entry name" value="CASP_dom"/>
</dbReference>
<dbReference type="InterPro" id="IPR045009">
    <property type="entry name" value="CASPL-5"/>
</dbReference>
<dbReference type="PANTHER" id="PTHR32021:SF0">
    <property type="entry name" value="CASP-LIKE PROTEIN 5B2"/>
    <property type="match status" value="1"/>
</dbReference>
<dbReference type="PANTHER" id="PTHR32021">
    <property type="entry name" value="CASP-LIKE PROTEIN 5B3"/>
    <property type="match status" value="1"/>
</dbReference>
<dbReference type="Pfam" id="PF04535">
    <property type="entry name" value="CASP_dom"/>
    <property type="match status" value="1"/>
</dbReference>
<reference key="1">
    <citation type="journal article" date="2005" name="PLoS Biol.">
        <title>The genomes of Oryza sativa: a history of duplications.</title>
        <authorList>
            <person name="Yu J."/>
            <person name="Wang J."/>
            <person name="Lin W."/>
            <person name="Li S."/>
            <person name="Li H."/>
            <person name="Zhou J."/>
            <person name="Ni P."/>
            <person name="Dong W."/>
            <person name="Hu S."/>
            <person name="Zeng C."/>
            <person name="Zhang J."/>
            <person name="Zhang Y."/>
            <person name="Li R."/>
            <person name="Xu Z."/>
            <person name="Li S."/>
            <person name="Li X."/>
            <person name="Zheng H."/>
            <person name="Cong L."/>
            <person name="Lin L."/>
            <person name="Yin J."/>
            <person name="Geng J."/>
            <person name="Li G."/>
            <person name="Shi J."/>
            <person name="Liu J."/>
            <person name="Lv H."/>
            <person name="Li J."/>
            <person name="Wang J."/>
            <person name="Deng Y."/>
            <person name="Ran L."/>
            <person name="Shi X."/>
            <person name="Wang X."/>
            <person name="Wu Q."/>
            <person name="Li C."/>
            <person name="Ren X."/>
            <person name="Wang J."/>
            <person name="Wang X."/>
            <person name="Li D."/>
            <person name="Liu D."/>
            <person name="Zhang X."/>
            <person name="Ji Z."/>
            <person name="Zhao W."/>
            <person name="Sun Y."/>
            <person name="Zhang Z."/>
            <person name="Bao J."/>
            <person name="Han Y."/>
            <person name="Dong L."/>
            <person name="Ji J."/>
            <person name="Chen P."/>
            <person name="Wu S."/>
            <person name="Liu J."/>
            <person name="Xiao Y."/>
            <person name="Bu D."/>
            <person name="Tan J."/>
            <person name="Yang L."/>
            <person name="Ye C."/>
            <person name="Zhang J."/>
            <person name="Xu J."/>
            <person name="Zhou Y."/>
            <person name="Yu Y."/>
            <person name="Zhang B."/>
            <person name="Zhuang S."/>
            <person name="Wei H."/>
            <person name="Liu B."/>
            <person name="Lei M."/>
            <person name="Yu H."/>
            <person name="Li Y."/>
            <person name="Xu H."/>
            <person name="Wei S."/>
            <person name="He X."/>
            <person name="Fang L."/>
            <person name="Zhang Z."/>
            <person name="Zhang Y."/>
            <person name="Huang X."/>
            <person name="Su Z."/>
            <person name="Tong W."/>
            <person name="Li J."/>
            <person name="Tong Z."/>
            <person name="Li S."/>
            <person name="Ye J."/>
            <person name="Wang L."/>
            <person name="Fang L."/>
            <person name="Lei T."/>
            <person name="Chen C.-S."/>
            <person name="Chen H.-C."/>
            <person name="Xu Z."/>
            <person name="Li H."/>
            <person name="Huang H."/>
            <person name="Zhang F."/>
            <person name="Xu H."/>
            <person name="Li N."/>
            <person name="Zhao C."/>
            <person name="Li S."/>
            <person name="Dong L."/>
            <person name="Huang Y."/>
            <person name="Li L."/>
            <person name="Xi Y."/>
            <person name="Qi Q."/>
            <person name="Li W."/>
            <person name="Zhang B."/>
            <person name="Hu W."/>
            <person name="Zhang Y."/>
            <person name="Tian X."/>
            <person name="Jiao Y."/>
            <person name="Liang X."/>
            <person name="Jin J."/>
            <person name="Gao L."/>
            <person name="Zheng W."/>
            <person name="Hao B."/>
            <person name="Liu S.-M."/>
            <person name="Wang W."/>
            <person name="Yuan L."/>
            <person name="Cao M."/>
            <person name="McDermott J."/>
            <person name="Samudrala R."/>
            <person name="Wang J."/>
            <person name="Wong G.K.-S."/>
            <person name="Yang H."/>
        </authorList>
    </citation>
    <scope>NUCLEOTIDE SEQUENCE [LARGE SCALE GENOMIC DNA]</scope>
    <scope>NUCLEOTIDE SEQUENCE [LARGE SCALE MRNA]</scope>
    <source>
        <strain>cv. 93-11</strain>
        <strain>cv. PA64s</strain>
        <tissue>Leaf</tissue>
    </source>
</reference>
<reference key="2">
    <citation type="journal article" date="2014" name="Plant Physiol.">
        <title>Functional and evolutionary analysis of the CASPARIAN STRIP MEMBRANE DOMAIN PROTEIN family.</title>
        <authorList>
            <person name="Roppolo D."/>
            <person name="Boeckmann B."/>
            <person name="Pfister A."/>
            <person name="Boutet E."/>
            <person name="Rubio M.C."/>
            <person name="Denervaud-Tendon V."/>
            <person name="Vermeer J.E."/>
            <person name="Gheyselinck J."/>
            <person name="Xenarios I."/>
            <person name="Geldner N."/>
        </authorList>
    </citation>
    <scope>GENE FAMILY</scope>
    <scope>NOMENCLATURE</scope>
</reference>
<keyword id="KW-1003">Cell membrane</keyword>
<keyword id="KW-0472">Membrane</keyword>
<keyword id="KW-1185">Reference proteome</keyword>
<keyword id="KW-0812">Transmembrane</keyword>
<keyword id="KW-1133">Transmembrane helix</keyword>
<gene>
    <name type="ORF">OsI_04425</name>
</gene>
<proteinExistence type="evidence at transcript level"/>
<protein>
    <recommendedName>
        <fullName>CASP-like protein 5B1</fullName>
        <shortName>OsCASPL5B1</shortName>
    </recommendedName>
</protein>
<name>CSPLR_ORYSI</name>
<feature type="chain" id="PRO_0000418690" description="CASP-like protein 5B1">
    <location>
        <begin position="1"/>
        <end position="153"/>
    </location>
</feature>
<feature type="topological domain" description="Cytoplasmic" evidence="2">
    <location>
        <begin position="1"/>
        <end position="20"/>
    </location>
</feature>
<feature type="transmembrane region" description="Helical" evidence="2">
    <location>
        <begin position="21"/>
        <end position="41"/>
    </location>
</feature>
<feature type="topological domain" description="Extracellular" evidence="2">
    <location>
        <position position="42"/>
    </location>
</feature>
<feature type="transmembrane region" description="Helical" evidence="2">
    <location>
        <begin position="43"/>
        <end position="63"/>
    </location>
</feature>
<feature type="topological domain" description="Cytoplasmic" evidence="2">
    <location>
        <begin position="64"/>
        <end position="76"/>
    </location>
</feature>
<feature type="transmembrane region" description="Helical" evidence="2">
    <location>
        <begin position="77"/>
        <end position="97"/>
    </location>
</feature>
<feature type="topological domain" description="Extracellular" evidence="2">
    <location>
        <begin position="98"/>
        <end position="128"/>
    </location>
</feature>
<feature type="transmembrane region" description="Helical" evidence="2">
    <location>
        <begin position="129"/>
        <end position="149"/>
    </location>
</feature>
<feature type="topological domain" description="Cytoplasmic" evidence="2">
    <location>
        <begin position="150"/>
        <end position="153"/>
    </location>
</feature>
<evidence type="ECO:0000250" key="1"/>
<evidence type="ECO:0000255" key="2"/>
<evidence type="ECO:0000305" key="3"/>
<comment type="subunit">
    <text evidence="1">Homodimer and heterodimers.</text>
</comment>
<comment type="subcellular location">
    <subcellularLocation>
        <location evidence="1">Cell membrane</location>
        <topology evidence="1">Multi-pass membrane protein</topology>
    </subcellularLocation>
</comment>
<comment type="similarity">
    <text evidence="3">Belongs to the Casparian strip membrane proteins (CASP) family.</text>
</comment>
<sequence>MRELAGSPGTWSGLSLRVGQLVFAAASVCATASALGFAAYTAFCYLIASMGLQALWSLGLACLDCYALKFKKDLHSAVLLSLFVVGDWVTAILSFAASCSAAGVVVLFDRDIYACRNPQLPCGRFELAIACAFLSWAFSATSALVMFWLLASL</sequence>
<accession>B8AC36</accession>